<sequence>MRCPFCGHAESQVKDSRPSEDGAAIRRRRMCPECGGRFTTFERVQLRELIIVKRSGRRSPFDRDKLVRSVGLATQKRPVDPERVERMVNGIVRQLESMGETELPSSTVGEMVMKALKSLDDVAYVRYASVYRDFKETSDFAKFLTEEGLSDGGEEEL</sequence>
<accession>Q9A8J5</accession>
<name>NRDR_CAUVC</name>
<dbReference type="EMBL" id="AE005673">
    <property type="protein sequence ID" value="AAK23339.1"/>
    <property type="molecule type" value="Genomic_DNA"/>
</dbReference>
<dbReference type="PIR" id="G87417">
    <property type="entry name" value="G87417"/>
</dbReference>
<dbReference type="RefSeq" id="NP_420171.1">
    <property type="nucleotide sequence ID" value="NC_002696.2"/>
</dbReference>
<dbReference type="RefSeq" id="WP_010919235.1">
    <property type="nucleotide sequence ID" value="NC_002696.2"/>
</dbReference>
<dbReference type="SMR" id="Q9A8J5"/>
<dbReference type="STRING" id="190650.CC_1358"/>
<dbReference type="EnsemblBacteria" id="AAK23339">
    <property type="protein sequence ID" value="AAK23339"/>
    <property type="gene ID" value="CC_1358"/>
</dbReference>
<dbReference type="KEGG" id="ccr:CC_1358"/>
<dbReference type="PATRIC" id="fig|190650.5.peg.1388"/>
<dbReference type="eggNOG" id="COG1327">
    <property type="taxonomic scope" value="Bacteria"/>
</dbReference>
<dbReference type="HOGENOM" id="CLU_108412_0_1_5"/>
<dbReference type="BioCyc" id="CAULO:CC1358-MONOMER"/>
<dbReference type="Proteomes" id="UP000001816">
    <property type="component" value="Chromosome"/>
</dbReference>
<dbReference type="GO" id="GO:0005524">
    <property type="term" value="F:ATP binding"/>
    <property type="evidence" value="ECO:0007669"/>
    <property type="project" value="UniProtKB-KW"/>
</dbReference>
<dbReference type="GO" id="GO:0003677">
    <property type="term" value="F:DNA binding"/>
    <property type="evidence" value="ECO:0007669"/>
    <property type="project" value="UniProtKB-KW"/>
</dbReference>
<dbReference type="GO" id="GO:0008270">
    <property type="term" value="F:zinc ion binding"/>
    <property type="evidence" value="ECO:0007669"/>
    <property type="project" value="UniProtKB-UniRule"/>
</dbReference>
<dbReference type="GO" id="GO:0045892">
    <property type="term" value="P:negative regulation of DNA-templated transcription"/>
    <property type="evidence" value="ECO:0007669"/>
    <property type="project" value="UniProtKB-UniRule"/>
</dbReference>
<dbReference type="HAMAP" id="MF_00440">
    <property type="entry name" value="NrdR"/>
    <property type="match status" value="1"/>
</dbReference>
<dbReference type="InterPro" id="IPR005144">
    <property type="entry name" value="ATP-cone_dom"/>
</dbReference>
<dbReference type="InterPro" id="IPR055173">
    <property type="entry name" value="NrdR-like_N"/>
</dbReference>
<dbReference type="InterPro" id="IPR003796">
    <property type="entry name" value="RNR_NrdR-like"/>
</dbReference>
<dbReference type="NCBIfam" id="TIGR00244">
    <property type="entry name" value="transcriptional regulator NrdR"/>
    <property type="match status" value="1"/>
</dbReference>
<dbReference type="PANTHER" id="PTHR30455">
    <property type="entry name" value="TRANSCRIPTIONAL REPRESSOR NRDR"/>
    <property type="match status" value="1"/>
</dbReference>
<dbReference type="PANTHER" id="PTHR30455:SF2">
    <property type="entry name" value="TRANSCRIPTIONAL REPRESSOR NRDR"/>
    <property type="match status" value="1"/>
</dbReference>
<dbReference type="Pfam" id="PF03477">
    <property type="entry name" value="ATP-cone"/>
    <property type="match status" value="1"/>
</dbReference>
<dbReference type="Pfam" id="PF22811">
    <property type="entry name" value="Zn_ribbon_NrdR"/>
    <property type="match status" value="1"/>
</dbReference>
<dbReference type="PROSITE" id="PS51161">
    <property type="entry name" value="ATP_CONE"/>
    <property type="match status" value="1"/>
</dbReference>
<gene>
    <name evidence="1" type="primary">nrdR</name>
    <name type="ordered locus">CC_1358</name>
</gene>
<reference key="1">
    <citation type="journal article" date="2001" name="Proc. Natl. Acad. Sci. U.S.A.">
        <title>Complete genome sequence of Caulobacter crescentus.</title>
        <authorList>
            <person name="Nierman W.C."/>
            <person name="Feldblyum T.V."/>
            <person name="Laub M.T."/>
            <person name="Paulsen I.T."/>
            <person name="Nelson K.E."/>
            <person name="Eisen J.A."/>
            <person name="Heidelberg J.F."/>
            <person name="Alley M.R.K."/>
            <person name="Ohta N."/>
            <person name="Maddock J.R."/>
            <person name="Potocka I."/>
            <person name="Nelson W.C."/>
            <person name="Newton A."/>
            <person name="Stephens C."/>
            <person name="Phadke N.D."/>
            <person name="Ely B."/>
            <person name="DeBoy R.T."/>
            <person name="Dodson R.J."/>
            <person name="Durkin A.S."/>
            <person name="Gwinn M.L."/>
            <person name="Haft D.H."/>
            <person name="Kolonay J.F."/>
            <person name="Smit J."/>
            <person name="Craven M.B."/>
            <person name="Khouri H.M."/>
            <person name="Shetty J."/>
            <person name="Berry K.J."/>
            <person name="Utterback T.R."/>
            <person name="Tran K."/>
            <person name="Wolf A.M."/>
            <person name="Vamathevan J.J."/>
            <person name="Ermolaeva M.D."/>
            <person name="White O."/>
            <person name="Salzberg S.L."/>
            <person name="Venter J.C."/>
            <person name="Shapiro L."/>
            <person name="Fraser C.M."/>
        </authorList>
    </citation>
    <scope>NUCLEOTIDE SEQUENCE [LARGE SCALE GENOMIC DNA]</scope>
    <source>
        <strain>ATCC 19089 / CIP 103742 / CB 15</strain>
    </source>
</reference>
<protein>
    <recommendedName>
        <fullName evidence="1">Transcriptional repressor NrdR</fullName>
    </recommendedName>
</protein>
<comment type="function">
    <text evidence="1">Negatively regulates transcription of bacterial ribonucleotide reductase nrd genes and operons by binding to NrdR-boxes.</text>
</comment>
<comment type="cofactor">
    <cofactor evidence="1">
        <name>Zn(2+)</name>
        <dbReference type="ChEBI" id="CHEBI:29105"/>
    </cofactor>
    <text evidence="1">Binds 1 zinc ion.</text>
</comment>
<comment type="similarity">
    <text evidence="1">Belongs to the NrdR family.</text>
</comment>
<feature type="chain" id="PRO_0000182279" description="Transcriptional repressor NrdR">
    <location>
        <begin position="1"/>
        <end position="157"/>
    </location>
</feature>
<feature type="domain" description="ATP-cone" evidence="1">
    <location>
        <begin position="49"/>
        <end position="139"/>
    </location>
</feature>
<feature type="zinc finger region" evidence="1">
    <location>
        <begin position="3"/>
        <end position="34"/>
    </location>
</feature>
<proteinExistence type="inferred from homology"/>
<keyword id="KW-0067">ATP-binding</keyword>
<keyword id="KW-0238">DNA-binding</keyword>
<keyword id="KW-0479">Metal-binding</keyword>
<keyword id="KW-0547">Nucleotide-binding</keyword>
<keyword id="KW-1185">Reference proteome</keyword>
<keyword id="KW-0678">Repressor</keyword>
<keyword id="KW-0804">Transcription</keyword>
<keyword id="KW-0805">Transcription regulation</keyword>
<keyword id="KW-0862">Zinc</keyword>
<keyword id="KW-0863">Zinc-finger</keyword>
<organism>
    <name type="scientific">Caulobacter vibrioides (strain ATCC 19089 / CIP 103742 / CB 15)</name>
    <name type="common">Caulobacter crescentus</name>
    <dbReference type="NCBI Taxonomy" id="190650"/>
    <lineage>
        <taxon>Bacteria</taxon>
        <taxon>Pseudomonadati</taxon>
        <taxon>Pseudomonadota</taxon>
        <taxon>Alphaproteobacteria</taxon>
        <taxon>Caulobacterales</taxon>
        <taxon>Caulobacteraceae</taxon>
        <taxon>Caulobacter</taxon>
    </lineage>
</organism>
<evidence type="ECO:0000255" key="1">
    <source>
        <dbReference type="HAMAP-Rule" id="MF_00440"/>
    </source>
</evidence>